<evidence type="ECO:0000255" key="1">
    <source>
        <dbReference type="HAMAP-Rule" id="MF_00746"/>
    </source>
</evidence>
<dbReference type="EMBL" id="CU928164">
    <property type="protein sequence ID" value="CAR19479.1"/>
    <property type="molecule type" value="Genomic_DNA"/>
</dbReference>
<dbReference type="RefSeq" id="WP_000858396.1">
    <property type="nucleotide sequence ID" value="NC_011750.1"/>
</dbReference>
<dbReference type="RefSeq" id="YP_002409283.1">
    <property type="nucleotide sequence ID" value="NC_011750.1"/>
</dbReference>
<dbReference type="SMR" id="B7NI07"/>
<dbReference type="STRING" id="585057.ECIAI39_3362"/>
<dbReference type="KEGG" id="ect:ECIAI39_3362"/>
<dbReference type="PATRIC" id="fig|585057.6.peg.3490"/>
<dbReference type="HOGENOM" id="CLU_113336_0_1_6"/>
<dbReference type="Proteomes" id="UP000000749">
    <property type="component" value="Chromosome"/>
</dbReference>
<dbReference type="GO" id="GO:0005737">
    <property type="term" value="C:cytoplasm"/>
    <property type="evidence" value="ECO:0007669"/>
    <property type="project" value="UniProtKB-SubCell"/>
</dbReference>
<dbReference type="GO" id="GO:0008270">
    <property type="term" value="F:zinc ion binding"/>
    <property type="evidence" value="ECO:0007669"/>
    <property type="project" value="UniProtKB-UniRule"/>
</dbReference>
<dbReference type="GO" id="GO:0006950">
    <property type="term" value="P:response to stress"/>
    <property type="evidence" value="ECO:0007669"/>
    <property type="project" value="UniProtKB-ARBA"/>
</dbReference>
<dbReference type="Gene3D" id="3.30.2010.10">
    <property type="entry name" value="Metalloproteases ('zincins'), catalytic domain"/>
    <property type="match status" value="1"/>
</dbReference>
<dbReference type="HAMAP" id="MF_00746">
    <property type="entry name" value="SprT"/>
    <property type="match status" value="1"/>
</dbReference>
<dbReference type="InterPro" id="IPR006640">
    <property type="entry name" value="SprT-like_domain"/>
</dbReference>
<dbReference type="InterPro" id="IPR035240">
    <property type="entry name" value="SprT_Zn_ribbon"/>
</dbReference>
<dbReference type="InterPro" id="IPR023483">
    <property type="entry name" value="Uncharacterised_SprT"/>
</dbReference>
<dbReference type="NCBIfam" id="NF003421">
    <property type="entry name" value="PRK04860.1"/>
    <property type="match status" value="1"/>
</dbReference>
<dbReference type="PANTHER" id="PTHR38773">
    <property type="entry name" value="PROTEIN SPRT"/>
    <property type="match status" value="1"/>
</dbReference>
<dbReference type="PANTHER" id="PTHR38773:SF1">
    <property type="entry name" value="PROTEIN SPRT"/>
    <property type="match status" value="1"/>
</dbReference>
<dbReference type="Pfam" id="PF10263">
    <property type="entry name" value="SprT-like"/>
    <property type="match status" value="1"/>
</dbReference>
<dbReference type="Pfam" id="PF17283">
    <property type="entry name" value="Zn_ribbon_SprT"/>
    <property type="match status" value="1"/>
</dbReference>
<dbReference type="SMART" id="SM00731">
    <property type="entry name" value="SprT"/>
    <property type="match status" value="1"/>
</dbReference>
<dbReference type="PROSITE" id="PS00142">
    <property type="entry name" value="ZINC_PROTEASE"/>
    <property type="match status" value="1"/>
</dbReference>
<proteinExistence type="inferred from homology"/>
<organism>
    <name type="scientific">Escherichia coli O7:K1 (strain IAI39 / ExPEC)</name>
    <dbReference type="NCBI Taxonomy" id="585057"/>
    <lineage>
        <taxon>Bacteria</taxon>
        <taxon>Pseudomonadati</taxon>
        <taxon>Pseudomonadota</taxon>
        <taxon>Gammaproteobacteria</taxon>
        <taxon>Enterobacterales</taxon>
        <taxon>Enterobacteriaceae</taxon>
        <taxon>Escherichia</taxon>
    </lineage>
</organism>
<sequence length="165" mass="19321">MKTSRLPIAIQQAVMRRLREKLAQANLKLGRNYPEPKLSYTQRGTSAGTAWLESYEIRLNPVLLLENSEAFIEEVVPHELAHLLVWKHFGRVAPHGKEWKWMMESVLGVPARRTHQFELQSVRRNTFPYRCKCQEHQLTVRRHNRVVRGEAVYRCVHCGEQLVAK</sequence>
<reference key="1">
    <citation type="journal article" date="2009" name="PLoS Genet.">
        <title>Organised genome dynamics in the Escherichia coli species results in highly diverse adaptive paths.</title>
        <authorList>
            <person name="Touchon M."/>
            <person name="Hoede C."/>
            <person name="Tenaillon O."/>
            <person name="Barbe V."/>
            <person name="Baeriswyl S."/>
            <person name="Bidet P."/>
            <person name="Bingen E."/>
            <person name="Bonacorsi S."/>
            <person name="Bouchier C."/>
            <person name="Bouvet O."/>
            <person name="Calteau A."/>
            <person name="Chiapello H."/>
            <person name="Clermont O."/>
            <person name="Cruveiller S."/>
            <person name="Danchin A."/>
            <person name="Diard M."/>
            <person name="Dossat C."/>
            <person name="Karoui M.E."/>
            <person name="Frapy E."/>
            <person name="Garry L."/>
            <person name="Ghigo J.M."/>
            <person name="Gilles A.M."/>
            <person name="Johnson J."/>
            <person name="Le Bouguenec C."/>
            <person name="Lescat M."/>
            <person name="Mangenot S."/>
            <person name="Martinez-Jehanne V."/>
            <person name="Matic I."/>
            <person name="Nassif X."/>
            <person name="Oztas S."/>
            <person name="Petit M.A."/>
            <person name="Pichon C."/>
            <person name="Rouy Z."/>
            <person name="Ruf C.S."/>
            <person name="Schneider D."/>
            <person name="Tourret J."/>
            <person name="Vacherie B."/>
            <person name="Vallenet D."/>
            <person name="Medigue C."/>
            <person name="Rocha E.P.C."/>
            <person name="Denamur E."/>
        </authorList>
    </citation>
    <scope>NUCLEOTIDE SEQUENCE [LARGE SCALE GENOMIC DNA]</scope>
    <source>
        <strain>IAI39 / ExPEC</strain>
    </source>
</reference>
<comment type="cofactor">
    <cofactor evidence="1">
        <name>Zn(2+)</name>
        <dbReference type="ChEBI" id="CHEBI:29105"/>
    </cofactor>
    <text evidence="1">Binds 1 zinc ion.</text>
</comment>
<comment type="subcellular location">
    <subcellularLocation>
        <location evidence="1">Cytoplasm</location>
    </subcellularLocation>
</comment>
<comment type="similarity">
    <text evidence="1">Belongs to the SprT family.</text>
</comment>
<protein>
    <recommendedName>
        <fullName evidence="1">Protein SprT</fullName>
    </recommendedName>
</protein>
<name>SPRT_ECO7I</name>
<feature type="chain" id="PRO_1000133236" description="Protein SprT">
    <location>
        <begin position="1"/>
        <end position="165"/>
    </location>
</feature>
<feature type="domain" description="SprT-like" evidence="1">
    <location>
        <begin position="20"/>
        <end position="163"/>
    </location>
</feature>
<feature type="active site" evidence="1">
    <location>
        <position position="79"/>
    </location>
</feature>
<feature type="binding site" evidence="1">
    <location>
        <position position="78"/>
    </location>
    <ligand>
        <name>Zn(2+)</name>
        <dbReference type="ChEBI" id="CHEBI:29105"/>
    </ligand>
</feature>
<feature type="binding site" evidence="1">
    <location>
        <position position="82"/>
    </location>
    <ligand>
        <name>Zn(2+)</name>
        <dbReference type="ChEBI" id="CHEBI:29105"/>
    </ligand>
</feature>
<keyword id="KW-0963">Cytoplasm</keyword>
<keyword id="KW-0479">Metal-binding</keyword>
<keyword id="KW-0862">Zinc</keyword>
<gene>
    <name evidence="1" type="primary">sprT</name>
    <name type="ordered locus">ECIAI39_3362</name>
</gene>
<accession>B7NI07</accession>